<protein>
    <recommendedName>
        <fullName evidence="1">Large ribosomal subunit protein bL12</fullName>
    </recommendedName>
    <alternativeName>
        <fullName evidence="2">50S ribosomal protein L7/L12</fullName>
    </alternativeName>
</protein>
<comment type="function">
    <text evidence="1">Forms part of the ribosomal stalk which helps the ribosome interact with GTP-bound translation factors. Is thus essential for accurate translation.</text>
</comment>
<comment type="subunit">
    <text evidence="1">Homodimer. Part of the ribosomal stalk of the 50S ribosomal subunit. Forms a multimeric L10(L12)X complex, where L10 forms an elongated spine to which 2 to 4 L12 dimers bind in a sequential fashion. Binds GTP-bound translation factors.</text>
</comment>
<comment type="similarity">
    <text evidence="1">Belongs to the bacterial ribosomal protein bL12 family.</text>
</comment>
<name>RL7_MYCCT</name>
<sequence length="122" mass="12864">MPITKDEIIKALEEMKLNELNELVKAIEDHFGVVASVGVAAAAPAEATNAAPTEVSVVMTSVGQQKVAVIKVVKELTGVGLMDAKKMVDGAMPVTIKEHVKPEEAEEMKAKLVEAGASIDLK</sequence>
<organism>
    <name type="scientific">Mycoplasma capricolum subsp. capricolum (strain California kid / ATCC 27343 / NCTC 10154)</name>
    <dbReference type="NCBI Taxonomy" id="340047"/>
    <lineage>
        <taxon>Bacteria</taxon>
        <taxon>Bacillati</taxon>
        <taxon>Mycoplasmatota</taxon>
        <taxon>Mollicutes</taxon>
        <taxon>Mycoplasmataceae</taxon>
        <taxon>Mycoplasma</taxon>
    </lineage>
</organism>
<keyword id="KW-0687">Ribonucleoprotein</keyword>
<keyword id="KW-0689">Ribosomal protein</keyword>
<gene>
    <name evidence="1" type="primary">rplL</name>
    <name type="ordered locus">MCAP_0068</name>
</gene>
<feature type="chain" id="PRO_1000195811" description="Large ribosomal subunit protein bL12">
    <location>
        <begin position="1"/>
        <end position="122"/>
    </location>
</feature>
<reference key="1">
    <citation type="submission" date="2005-09" db="EMBL/GenBank/DDBJ databases">
        <authorList>
            <person name="Glass J.I."/>
            <person name="Lartigue C."/>
            <person name="Pfannkoch C."/>
            <person name="Baden-Tillson H."/>
            <person name="Smith H.O."/>
            <person name="Venter J.C."/>
            <person name="Roske K."/>
            <person name="Wise K.S."/>
            <person name="Calcutt M.J."/>
            <person name="Nelson W.C."/>
            <person name="Nierman W.C."/>
        </authorList>
    </citation>
    <scope>NUCLEOTIDE SEQUENCE [LARGE SCALE GENOMIC DNA]</scope>
    <source>
        <strain>California kid / ATCC 27343 / NCTC 10154</strain>
    </source>
</reference>
<accession>Q2ST50</accession>
<evidence type="ECO:0000255" key="1">
    <source>
        <dbReference type="HAMAP-Rule" id="MF_00368"/>
    </source>
</evidence>
<evidence type="ECO:0000305" key="2"/>
<proteinExistence type="inferred from homology"/>
<dbReference type="EMBL" id="CP000123">
    <property type="protein sequence ID" value="ABC01611.1"/>
    <property type="molecule type" value="Genomic_DNA"/>
</dbReference>
<dbReference type="RefSeq" id="WP_011386968.1">
    <property type="nucleotide sequence ID" value="NC_007633.1"/>
</dbReference>
<dbReference type="SMR" id="Q2ST50"/>
<dbReference type="GeneID" id="23778977"/>
<dbReference type="KEGG" id="mcp:MCAP_0068"/>
<dbReference type="HOGENOM" id="CLU_086499_3_2_14"/>
<dbReference type="PhylomeDB" id="Q2ST50"/>
<dbReference type="Proteomes" id="UP000001928">
    <property type="component" value="Chromosome"/>
</dbReference>
<dbReference type="GO" id="GO:0022625">
    <property type="term" value="C:cytosolic large ribosomal subunit"/>
    <property type="evidence" value="ECO:0007669"/>
    <property type="project" value="TreeGrafter"/>
</dbReference>
<dbReference type="GO" id="GO:0003729">
    <property type="term" value="F:mRNA binding"/>
    <property type="evidence" value="ECO:0007669"/>
    <property type="project" value="TreeGrafter"/>
</dbReference>
<dbReference type="GO" id="GO:0003735">
    <property type="term" value="F:structural constituent of ribosome"/>
    <property type="evidence" value="ECO:0007669"/>
    <property type="project" value="InterPro"/>
</dbReference>
<dbReference type="GO" id="GO:0006412">
    <property type="term" value="P:translation"/>
    <property type="evidence" value="ECO:0007669"/>
    <property type="project" value="UniProtKB-UniRule"/>
</dbReference>
<dbReference type="FunFam" id="3.30.1390.10:FF:000001">
    <property type="entry name" value="50S ribosomal protein L7/L12"/>
    <property type="match status" value="1"/>
</dbReference>
<dbReference type="Gene3D" id="3.30.1390.10">
    <property type="match status" value="1"/>
</dbReference>
<dbReference type="Gene3D" id="1.20.5.710">
    <property type="entry name" value="Single helix bin"/>
    <property type="match status" value="1"/>
</dbReference>
<dbReference type="HAMAP" id="MF_00368">
    <property type="entry name" value="Ribosomal_bL12"/>
    <property type="match status" value="1"/>
</dbReference>
<dbReference type="InterPro" id="IPR000206">
    <property type="entry name" value="Ribosomal_bL12"/>
</dbReference>
<dbReference type="InterPro" id="IPR013823">
    <property type="entry name" value="Ribosomal_bL12_C"/>
</dbReference>
<dbReference type="InterPro" id="IPR014719">
    <property type="entry name" value="Ribosomal_bL12_C/ClpS-like"/>
</dbReference>
<dbReference type="InterPro" id="IPR008932">
    <property type="entry name" value="Ribosomal_bL12_oligo"/>
</dbReference>
<dbReference type="InterPro" id="IPR036235">
    <property type="entry name" value="Ribosomal_bL12_oligo_N_sf"/>
</dbReference>
<dbReference type="NCBIfam" id="TIGR00855">
    <property type="entry name" value="L12"/>
    <property type="match status" value="1"/>
</dbReference>
<dbReference type="PANTHER" id="PTHR45987">
    <property type="entry name" value="39S RIBOSOMAL PROTEIN L12"/>
    <property type="match status" value="1"/>
</dbReference>
<dbReference type="PANTHER" id="PTHR45987:SF4">
    <property type="entry name" value="LARGE RIBOSOMAL SUBUNIT PROTEIN BL12M"/>
    <property type="match status" value="1"/>
</dbReference>
<dbReference type="Pfam" id="PF00542">
    <property type="entry name" value="Ribosomal_L12"/>
    <property type="match status" value="1"/>
</dbReference>
<dbReference type="Pfam" id="PF16320">
    <property type="entry name" value="Ribosomal_L12_N"/>
    <property type="match status" value="1"/>
</dbReference>
<dbReference type="SUPFAM" id="SSF54736">
    <property type="entry name" value="ClpS-like"/>
    <property type="match status" value="1"/>
</dbReference>
<dbReference type="SUPFAM" id="SSF48300">
    <property type="entry name" value="Ribosomal protein L7/12, oligomerisation (N-terminal) domain"/>
    <property type="match status" value="1"/>
</dbReference>